<reference key="1">
    <citation type="submission" date="2008-10" db="EMBL/GenBank/DDBJ databases">
        <title>Genome sequence of Bacillus cereus G9842.</title>
        <authorList>
            <person name="Dodson R.J."/>
            <person name="Durkin A.S."/>
            <person name="Rosovitz M.J."/>
            <person name="Rasko D.A."/>
            <person name="Hoffmaster A."/>
            <person name="Ravel J."/>
            <person name="Sutton G."/>
        </authorList>
    </citation>
    <scope>NUCLEOTIDE SEQUENCE [LARGE SCALE GENOMIC DNA]</scope>
    <source>
        <strain>G9842</strain>
    </source>
</reference>
<evidence type="ECO:0000255" key="1">
    <source>
        <dbReference type="HAMAP-Rule" id="MF_01364"/>
    </source>
</evidence>
<evidence type="ECO:0000305" key="2"/>
<gene>
    <name evidence="1" type="primary">rpsZ</name>
    <name evidence="1" type="synonym">rpsN</name>
    <name type="ordered locus">BCG9842_B5182</name>
</gene>
<feature type="chain" id="PRO_1000143881" description="Small ribosomal subunit protein uS14">
    <location>
        <begin position="1"/>
        <end position="61"/>
    </location>
</feature>
<feature type="binding site" evidence="1">
    <location>
        <position position="24"/>
    </location>
    <ligand>
        <name>Zn(2+)</name>
        <dbReference type="ChEBI" id="CHEBI:29105"/>
    </ligand>
</feature>
<feature type="binding site" evidence="1">
    <location>
        <position position="27"/>
    </location>
    <ligand>
        <name>Zn(2+)</name>
        <dbReference type="ChEBI" id="CHEBI:29105"/>
    </ligand>
</feature>
<feature type="binding site" evidence="1">
    <location>
        <position position="40"/>
    </location>
    <ligand>
        <name>Zn(2+)</name>
        <dbReference type="ChEBI" id="CHEBI:29105"/>
    </ligand>
</feature>
<feature type="binding site" evidence="1">
    <location>
        <position position="43"/>
    </location>
    <ligand>
        <name>Zn(2+)</name>
        <dbReference type="ChEBI" id="CHEBI:29105"/>
    </ligand>
</feature>
<name>RS14Z_BACC2</name>
<comment type="function">
    <text evidence="1">Binds 16S rRNA, required for the assembly of 30S particles and may also be responsible for determining the conformation of the 16S rRNA at the A site.</text>
</comment>
<comment type="cofactor">
    <cofactor evidence="1">
        <name>Zn(2+)</name>
        <dbReference type="ChEBI" id="CHEBI:29105"/>
    </cofactor>
    <text evidence="1">Binds 1 zinc ion per subunit.</text>
</comment>
<comment type="subunit">
    <text evidence="1">Part of the 30S ribosomal subunit. Contacts proteins S3 and S10.</text>
</comment>
<comment type="similarity">
    <text evidence="1">Belongs to the universal ribosomal protein uS14 family. Zinc-binding uS14 subfamily.</text>
</comment>
<sequence length="61" mass="7296">MAKKSMIAKQKRTPKFKVQEYTRCERCGRPHSVYRKFKLCRICFRELAYKGQIPGVKKASW</sequence>
<proteinExistence type="inferred from homology"/>
<accession>B7IT32</accession>
<protein>
    <recommendedName>
        <fullName evidence="1">Small ribosomal subunit protein uS14</fullName>
    </recommendedName>
    <alternativeName>
        <fullName evidence="2">30S ribosomal protein S14 type Z</fullName>
    </alternativeName>
</protein>
<keyword id="KW-0479">Metal-binding</keyword>
<keyword id="KW-0687">Ribonucleoprotein</keyword>
<keyword id="KW-0689">Ribosomal protein</keyword>
<keyword id="KW-0694">RNA-binding</keyword>
<keyword id="KW-0699">rRNA-binding</keyword>
<keyword id="KW-0862">Zinc</keyword>
<organism>
    <name type="scientific">Bacillus cereus (strain G9842)</name>
    <dbReference type="NCBI Taxonomy" id="405531"/>
    <lineage>
        <taxon>Bacteria</taxon>
        <taxon>Bacillati</taxon>
        <taxon>Bacillota</taxon>
        <taxon>Bacilli</taxon>
        <taxon>Bacillales</taxon>
        <taxon>Bacillaceae</taxon>
        <taxon>Bacillus</taxon>
        <taxon>Bacillus cereus group</taxon>
    </lineage>
</organism>
<dbReference type="EMBL" id="CP001186">
    <property type="protein sequence ID" value="ACK97371.1"/>
    <property type="molecule type" value="Genomic_DNA"/>
</dbReference>
<dbReference type="RefSeq" id="WP_001085700.1">
    <property type="nucleotide sequence ID" value="NC_011772.1"/>
</dbReference>
<dbReference type="SMR" id="B7IT32"/>
<dbReference type="GeneID" id="93010930"/>
<dbReference type="KEGG" id="bcg:BCG9842_B5182"/>
<dbReference type="HOGENOM" id="CLU_139869_3_0_9"/>
<dbReference type="Proteomes" id="UP000006744">
    <property type="component" value="Chromosome"/>
</dbReference>
<dbReference type="GO" id="GO:0015935">
    <property type="term" value="C:small ribosomal subunit"/>
    <property type="evidence" value="ECO:0007669"/>
    <property type="project" value="TreeGrafter"/>
</dbReference>
<dbReference type="GO" id="GO:0019843">
    <property type="term" value="F:rRNA binding"/>
    <property type="evidence" value="ECO:0007669"/>
    <property type="project" value="UniProtKB-UniRule"/>
</dbReference>
<dbReference type="GO" id="GO:0003735">
    <property type="term" value="F:structural constituent of ribosome"/>
    <property type="evidence" value="ECO:0007669"/>
    <property type="project" value="InterPro"/>
</dbReference>
<dbReference type="GO" id="GO:0008270">
    <property type="term" value="F:zinc ion binding"/>
    <property type="evidence" value="ECO:0007669"/>
    <property type="project" value="UniProtKB-UniRule"/>
</dbReference>
<dbReference type="GO" id="GO:0006412">
    <property type="term" value="P:translation"/>
    <property type="evidence" value="ECO:0007669"/>
    <property type="project" value="UniProtKB-UniRule"/>
</dbReference>
<dbReference type="FunFam" id="4.10.830.10:FF:000001">
    <property type="entry name" value="30S ribosomal protein S14 type Z"/>
    <property type="match status" value="1"/>
</dbReference>
<dbReference type="Gene3D" id="4.10.830.10">
    <property type="entry name" value="30s Ribosomal Protein S14, Chain N"/>
    <property type="match status" value="1"/>
</dbReference>
<dbReference type="HAMAP" id="MF_01364_B">
    <property type="entry name" value="Ribosomal_uS14_2_B"/>
    <property type="match status" value="1"/>
</dbReference>
<dbReference type="InterPro" id="IPR001209">
    <property type="entry name" value="Ribosomal_uS14"/>
</dbReference>
<dbReference type="InterPro" id="IPR023053">
    <property type="entry name" value="Ribosomal_uS14_bact"/>
</dbReference>
<dbReference type="InterPro" id="IPR018271">
    <property type="entry name" value="Ribosomal_uS14_CS"/>
</dbReference>
<dbReference type="InterPro" id="IPR043140">
    <property type="entry name" value="Ribosomal_uS14_sf"/>
</dbReference>
<dbReference type="NCBIfam" id="NF005974">
    <property type="entry name" value="PRK08061.1"/>
    <property type="match status" value="1"/>
</dbReference>
<dbReference type="PANTHER" id="PTHR19836">
    <property type="entry name" value="30S RIBOSOMAL PROTEIN S14"/>
    <property type="match status" value="1"/>
</dbReference>
<dbReference type="PANTHER" id="PTHR19836:SF26">
    <property type="entry name" value="SMALL RIBOSOMAL SUBUNIT PROTEIN US14B"/>
    <property type="match status" value="1"/>
</dbReference>
<dbReference type="Pfam" id="PF00253">
    <property type="entry name" value="Ribosomal_S14"/>
    <property type="match status" value="1"/>
</dbReference>
<dbReference type="SUPFAM" id="SSF57716">
    <property type="entry name" value="Glucocorticoid receptor-like (DNA-binding domain)"/>
    <property type="match status" value="1"/>
</dbReference>
<dbReference type="PROSITE" id="PS00527">
    <property type="entry name" value="RIBOSOMAL_S14"/>
    <property type="match status" value="1"/>
</dbReference>